<name>YL494_MIMIV</name>
<keyword id="KW-1185">Reference proteome</keyword>
<organismHost>
    <name type="scientific">Acanthamoeba polyphaga</name>
    <name type="common">Amoeba</name>
    <dbReference type="NCBI Taxonomy" id="5757"/>
</organismHost>
<reference key="1">
    <citation type="journal article" date="2004" name="Science">
        <title>The 1.2-megabase genome sequence of Mimivirus.</title>
        <authorList>
            <person name="Raoult D."/>
            <person name="Audic S."/>
            <person name="Robert C."/>
            <person name="Abergel C."/>
            <person name="Renesto P."/>
            <person name="Ogata H."/>
            <person name="La Scola B."/>
            <person name="Susan M."/>
            <person name="Claverie J.-M."/>
        </authorList>
    </citation>
    <scope>NUCLEOTIDE SEQUENCE [LARGE SCALE GENOMIC DNA]</scope>
    <source>
        <strain>Rowbotham-Bradford</strain>
    </source>
</reference>
<protein>
    <recommendedName>
        <fullName>Uncharacterized protein L494</fullName>
    </recommendedName>
</protein>
<proteinExistence type="predicted"/>
<sequence length="273" mass="31616">MDNIDSYDNYSEELSSFNPIFRNFTHITSDSENLDSQFIKNSLGVDLDKYTKDSSLLFMIESEYFCDFCNGKPLNLIKYYLLVVLGSSKDVSDPIGYIPYPDKSSIHDCNLYNEFFMKHPHSLLQQDESSCNGDCKLDDLMTLCKWCPICYNKLCNATNLQKILRSAISFTAIPQSSVLYVRRNTKKINYNDINDLELVKKFLNYDKLKIECIKQRIENADNKIKTYVEMITKEKIYNTKILETLLEERGGSLENYNCLITGIDSLLNKNTDN</sequence>
<gene>
    <name type="ordered locus">MIMI_L494</name>
</gene>
<feature type="chain" id="PRO_0000253274" description="Uncharacterized protein L494">
    <location>
        <begin position="1"/>
        <end position="273"/>
    </location>
</feature>
<dbReference type="EMBL" id="AY653733">
    <property type="protein sequence ID" value="AAV50759.1"/>
    <property type="molecule type" value="Genomic_DNA"/>
</dbReference>
<dbReference type="SMR" id="Q5UQG6"/>
<dbReference type="KEGG" id="vg:9925124"/>
<dbReference type="Proteomes" id="UP000001134">
    <property type="component" value="Genome"/>
</dbReference>
<dbReference type="InterPro" id="IPR045368">
    <property type="entry name" value="DUF5886"/>
</dbReference>
<dbReference type="Pfam" id="PF19233">
    <property type="entry name" value="DUF5886"/>
    <property type="match status" value="1"/>
</dbReference>
<organism>
    <name type="scientific">Acanthamoeba polyphaga mimivirus</name>
    <name type="common">APMV</name>
    <dbReference type="NCBI Taxonomy" id="212035"/>
    <lineage>
        <taxon>Viruses</taxon>
        <taxon>Varidnaviria</taxon>
        <taxon>Bamfordvirae</taxon>
        <taxon>Nucleocytoviricota</taxon>
        <taxon>Megaviricetes</taxon>
        <taxon>Imitervirales</taxon>
        <taxon>Mimiviridae</taxon>
        <taxon>Megamimivirinae</taxon>
        <taxon>Mimivirus</taxon>
        <taxon>Mimivirus bradfordmassiliense</taxon>
    </lineage>
</organism>
<accession>Q5UQG6</accession>